<sequence length="170" mass="19106">MALLPILEFPDPRLRTKAALIDAAEVTTPAFQELVDNMFQTMYDAPGIGLAATQVDVHKRFMVIDVSEEKNEPHVFINPEIVAKDGGRVYQEGCLSVPGIFADVTRADTITVKYLDRDGQQQELEAGEVLATCIQHEMDHLDGKLFIDYLSPLKREMVRKKLAKQRKHVA</sequence>
<comment type="function">
    <text evidence="1">Removes the formyl group from the N-terminal Met of newly synthesized proteins. Requires at least a dipeptide for an efficient rate of reaction. N-terminal L-methionine is a prerequisite for activity but the enzyme has broad specificity at other positions.</text>
</comment>
<comment type="catalytic activity">
    <reaction evidence="1">
        <text>N-terminal N-formyl-L-methionyl-[peptide] + H2O = N-terminal L-methionyl-[peptide] + formate</text>
        <dbReference type="Rhea" id="RHEA:24420"/>
        <dbReference type="Rhea" id="RHEA-COMP:10639"/>
        <dbReference type="Rhea" id="RHEA-COMP:10640"/>
        <dbReference type="ChEBI" id="CHEBI:15377"/>
        <dbReference type="ChEBI" id="CHEBI:15740"/>
        <dbReference type="ChEBI" id="CHEBI:49298"/>
        <dbReference type="ChEBI" id="CHEBI:64731"/>
        <dbReference type="EC" id="3.5.1.88"/>
    </reaction>
</comment>
<comment type="cofactor">
    <cofactor evidence="1">
        <name>Fe(2+)</name>
        <dbReference type="ChEBI" id="CHEBI:29033"/>
    </cofactor>
    <text evidence="1">Binds 1 Fe(2+) ion.</text>
</comment>
<comment type="similarity">
    <text evidence="1">Belongs to the polypeptide deformylase family.</text>
</comment>
<organism>
    <name type="scientific">Stenotrophomonas maltophilia (strain R551-3)</name>
    <dbReference type="NCBI Taxonomy" id="391008"/>
    <lineage>
        <taxon>Bacteria</taxon>
        <taxon>Pseudomonadati</taxon>
        <taxon>Pseudomonadota</taxon>
        <taxon>Gammaproteobacteria</taxon>
        <taxon>Lysobacterales</taxon>
        <taxon>Lysobacteraceae</taxon>
        <taxon>Stenotrophomonas</taxon>
        <taxon>Stenotrophomonas maltophilia group</taxon>
    </lineage>
</organism>
<reference key="1">
    <citation type="submission" date="2008-06" db="EMBL/GenBank/DDBJ databases">
        <title>Complete sequence of Stenotrophomonas maltophilia R551-3.</title>
        <authorList>
            <consortium name="US DOE Joint Genome Institute"/>
            <person name="Lucas S."/>
            <person name="Copeland A."/>
            <person name="Lapidus A."/>
            <person name="Glavina del Rio T."/>
            <person name="Dalin E."/>
            <person name="Tice H."/>
            <person name="Pitluck S."/>
            <person name="Chain P."/>
            <person name="Malfatti S."/>
            <person name="Shin M."/>
            <person name="Vergez L."/>
            <person name="Lang D."/>
            <person name="Schmutz J."/>
            <person name="Larimer F."/>
            <person name="Land M."/>
            <person name="Hauser L."/>
            <person name="Kyrpides N."/>
            <person name="Mikhailova N."/>
            <person name="Taghavi S."/>
            <person name="Monchy S."/>
            <person name="Newman L."/>
            <person name="Vangronsveld J."/>
            <person name="van der Lelie D."/>
            <person name="Richardson P."/>
        </authorList>
    </citation>
    <scope>NUCLEOTIDE SEQUENCE [LARGE SCALE GENOMIC DNA]</scope>
    <source>
        <strain>R551-3</strain>
    </source>
</reference>
<feature type="chain" id="PRO_1000097346" description="Peptide deformylase">
    <location>
        <begin position="1"/>
        <end position="170"/>
    </location>
</feature>
<feature type="active site" evidence="1">
    <location>
        <position position="137"/>
    </location>
</feature>
<feature type="binding site" evidence="1">
    <location>
        <position position="94"/>
    </location>
    <ligand>
        <name>Fe cation</name>
        <dbReference type="ChEBI" id="CHEBI:24875"/>
    </ligand>
</feature>
<feature type="binding site" evidence="1">
    <location>
        <position position="136"/>
    </location>
    <ligand>
        <name>Fe cation</name>
        <dbReference type="ChEBI" id="CHEBI:24875"/>
    </ligand>
</feature>
<feature type="binding site" evidence="1">
    <location>
        <position position="140"/>
    </location>
    <ligand>
        <name>Fe cation</name>
        <dbReference type="ChEBI" id="CHEBI:24875"/>
    </ligand>
</feature>
<protein>
    <recommendedName>
        <fullName evidence="1">Peptide deformylase</fullName>
        <shortName evidence="1">PDF</shortName>
        <ecNumber evidence="1">3.5.1.88</ecNumber>
    </recommendedName>
    <alternativeName>
        <fullName evidence="1">Polypeptide deformylase</fullName>
    </alternativeName>
</protein>
<accession>B4SKH7</accession>
<keyword id="KW-0378">Hydrolase</keyword>
<keyword id="KW-0408">Iron</keyword>
<keyword id="KW-0479">Metal-binding</keyword>
<keyword id="KW-0648">Protein biosynthesis</keyword>
<name>DEF_STRM5</name>
<gene>
    <name evidence="1" type="primary">def</name>
    <name type="ordered locus">Smal_3585</name>
</gene>
<dbReference type="EC" id="3.5.1.88" evidence="1"/>
<dbReference type="EMBL" id="CP001111">
    <property type="protein sequence ID" value="ACF53284.1"/>
    <property type="molecule type" value="Genomic_DNA"/>
</dbReference>
<dbReference type="RefSeq" id="WP_006395832.1">
    <property type="nucleotide sequence ID" value="NC_011071.1"/>
</dbReference>
<dbReference type="SMR" id="B4SKH7"/>
<dbReference type="STRING" id="391008.Smal_3585"/>
<dbReference type="KEGG" id="smt:Smal_3585"/>
<dbReference type="eggNOG" id="COG0242">
    <property type="taxonomic scope" value="Bacteria"/>
</dbReference>
<dbReference type="HOGENOM" id="CLU_061901_2_1_6"/>
<dbReference type="OrthoDB" id="9804313at2"/>
<dbReference type="Proteomes" id="UP000001867">
    <property type="component" value="Chromosome"/>
</dbReference>
<dbReference type="GO" id="GO:0046872">
    <property type="term" value="F:metal ion binding"/>
    <property type="evidence" value="ECO:0007669"/>
    <property type="project" value="UniProtKB-KW"/>
</dbReference>
<dbReference type="GO" id="GO:0042586">
    <property type="term" value="F:peptide deformylase activity"/>
    <property type="evidence" value="ECO:0007669"/>
    <property type="project" value="UniProtKB-UniRule"/>
</dbReference>
<dbReference type="GO" id="GO:0043686">
    <property type="term" value="P:co-translational protein modification"/>
    <property type="evidence" value="ECO:0007669"/>
    <property type="project" value="TreeGrafter"/>
</dbReference>
<dbReference type="GO" id="GO:0006412">
    <property type="term" value="P:translation"/>
    <property type="evidence" value="ECO:0007669"/>
    <property type="project" value="UniProtKB-UniRule"/>
</dbReference>
<dbReference type="CDD" id="cd00487">
    <property type="entry name" value="Pep_deformylase"/>
    <property type="match status" value="1"/>
</dbReference>
<dbReference type="FunFam" id="3.90.45.10:FF:000001">
    <property type="entry name" value="Peptide deformylase"/>
    <property type="match status" value="1"/>
</dbReference>
<dbReference type="Gene3D" id="3.90.45.10">
    <property type="entry name" value="Peptide deformylase"/>
    <property type="match status" value="1"/>
</dbReference>
<dbReference type="HAMAP" id="MF_00163">
    <property type="entry name" value="Pep_deformylase"/>
    <property type="match status" value="1"/>
</dbReference>
<dbReference type="InterPro" id="IPR023635">
    <property type="entry name" value="Peptide_deformylase"/>
</dbReference>
<dbReference type="InterPro" id="IPR036821">
    <property type="entry name" value="Peptide_deformylase_sf"/>
</dbReference>
<dbReference type="NCBIfam" id="TIGR00079">
    <property type="entry name" value="pept_deformyl"/>
    <property type="match status" value="1"/>
</dbReference>
<dbReference type="NCBIfam" id="NF001159">
    <property type="entry name" value="PRK00150.1-3"/>
    <property type="match status" value="1"/>
</dbReference>
<dbReference type="PANTHER" id="PTHR10458">
    <property type="entry name" value="PEPTIDE DEFORMYLASE"/>
    <property type="match status" value="1"/>
</dbReference>
<dbReference type="PANTHER" id="PTHR10458:SF21">
    <property type="entry name" value="PEPTIDE DEFORMYLASE"/>
    <property type="match status" value="1"/>
</dbReference>
<dbReference type="Pfam" id="PF01327">
    <property type="entry name" value="Pep_deformylase"/>
    <property type="match status" value="1"/>
</dbReference>
<dbReference type="PIRSF" id="PIRSF004749">
    <property type="entry name" value="Pep_def"/>
    <property type="match status" value="1"/>
</dbReference>
<dbReference type="PRINTS" id="PR01576">
    <property type="entry name" value="PDEFORMYLASE"/>
</dbReference>
<dbReference type="SUPFAM" id="SSF56420">
    <property type="entry name" value="Peptide deformylase"/>
    <property type="match status" value="1"/>
</dbReference>
<evidence type="ECO:0000255" key="1">
    <source>
        <dbReference type="HAMAP-Rule" id="MF_00163"/>
    </source>
</evidence>
<proteinExistence type="inferred from homology"/>